<dbReference type="EC" id="2.1.3.2" evidence="1"/>
<dbReference type="EMBL" id="CP001110">
    <property type="protein sequence ID" value="ACF44262.1"/>
    <property type="molecule type" value="Genomic_DNA"/>
</dbReference>
<dbReference type="SMR" id="B4SCQ7"/>
<dbReference type="STRING" id="324925.Ppha_2055"/>
<dbReference type="KEGG" id="pph:Ppha_2055"/>
<dbReference type="eggNOG" id="COG0540">
    <property type="taxonomic scope" value="Bacteria"/>
</dbReference>
<dbReference type="HOGENOM" id="CLU_043846_2_0_10"/>
<dbReference type="OrthoDB" id="9774690at2"/>
<dbReference type="UniPathway" id="UPA00070">
    <property type="reaction ID" value="UER00116"/>
</dbReference>
<dbReference type="Proteomes" id="UP000002724">
    <property type="component" value="Chromosome"/>
</dbReference>
<dbReference type="GO" id="GO:0005829">
    <property type="term" value="C:cytosol"/>
    <property type="evidence" value="ECO:0007669"/>
    <property type="project" value="TreeGrafter"/>
</dbReference>
<dbReference type="GO" id="GO:0016597">
    <property type="term" value="F:amino acid binding"/>
    <property type="evidence" value="ECO:0007669"/>
    <property type="project" value="InterPro"/>
</dbReference>
<dbReference type="GO" id="GO:0004070">
    <property type="term" value="F:aspartate carbamoyltransferase activity"/>
    <property type="evidence" value="ECO:0007669"/>
    <property type="project" value="UniProtKB-UniRule"/>
</dbReference>
<dbReference type="GO" id="GO:0006207">
    <property type="term" value="P:'de novo' pyrimidine nucleobase biosynthetic process"/>
    <property type="evidence" value="ECO:0007669"/>
    <property type="project" value="InterPro"/>
</dbReference>
<dbReference type="GO" id="GO:0044205">
    <property type="term" value="P:'de novo' UMP biosynthetic process"/>
    <property type="evidence" value="ECO:0007669"/>
    <property type="project" value="UniProtKB-UniRule"/>
</dbReference>
<dbReference type="GO" id="GO:0006520">
    <property type="term" value="P:amino acid metabolic process"/>
    <property type="evidence" value="ECO:0007669"/>
    <property type="project" value="InterPro"/>
</dbReference>
<dbReference type="Gene3D" id="3.40.50.1370">
    <property type="entry name" value="Aspartate/ornithine carbamoyltransferase"/>
    <property type="match status" value="2"/>
</dbReference>
<dbReference type="HAMAP" id="MF_00001">
    <property type="entry name" value="Asp_carb_tr"/>
    <property type="match status" value="1"/>
</dbReference>
<dbReference type="InterPro" id="IPR006132">
    <property type="entry name" value="Asp/Orn_carbamoyltranf_P-bd"/>
</dbReference>
<dbReference type="InterPro" id="IPR006130">
    <property type="entry name" value="Asp/Orn_carbamoylTrfase"/>
</dbReference>
<dbReference type="InterPro" id="IPR036901">
    <property type="entry name" value="Asp/Orn_carbamoylTrfase_sf"/>
</dbReference>
<dbReference type="InterPro" id="IPR002082">
    <property type="entry name" value="Asp_carbamoyltransf"/>
</dbReference>
<dbReference type="InterPro" id="IPR006131">
    <property type="entry name" value="Asp_carbamoyltransf_Asp/Orn-bd"/>
</dbReference>
<dbReference type="NCBIfam" id="TIGR00670">
    <property type="entry name" value="asp_carb_tr"/>
    <property type="match status" value="1"/>
</dbReference>
<dbReference type="NCBIfam" id="NF002032">
    <property type="entry name" value="PRK00856.1"/>
    <property type="match status" value="1"/>
</dbReference>
<dbReference type="PANTHER" id="PTHR45753:SF6">
    <property type="entry name" value="ASPARTATE CARBAMOYLTRANSFERASE"/>
    <property type="match status" value="1"/>
</dbReference>
<dbReference type="PANTHER" id="PTHR45753">
    <property type="entry name" value="ORNITHINE CARBAMOYLTRANSFERASE, MITOCHONDRIAL"/>
    <property type="match status" value="1"/>
</dbReference>
<dbReference type="Pfam" id="PF00185">
    <property type="entry name" value="OTCace"/>
    <property type="match status" value="1"/>
</dbReference>
<dbReference type="Pfam" id="PF02729">
    <property type="entry name" value="OTCace_N"/>
    <property type="match status" value="1"/>
</dbReference>
<dbReference type="PRINTS" id="PR00100">
    <property type="entry name" value="AOTCASE"/>
</dbReference>
<dbReference type="PRINTS" id="PR00101">
    <property type="entry name" value="ATCASE"/>
</dbReference>
<dbReference type="SUPFAM" id="SSF53671">
    <property type="entry name" value="Aspartate/ornithine carbamoyltransferase"/>
    <property type="match status" value="1"/>
</dbReference>
<dbReference type="PROSITE" id="PS00097">
    <property type="entry name" value="CARBAMOYLTRANSFERASE"/>
    <property type="match status" value="1"/>
</dbReference>
<comment type="function">
    <text evidence="1">Catalyzes the condensation of carbamoyl phosphate and aspartate to form carbamoyl aspartate and inorganic phosphate, the committed step in the de novo pyrimidine nucleotide biosynthesis pathway.</text>
</comment>
<comment type="catalytic activity">
    <reaction evidence="1">
        <text>carbamoyl phosphate + L-aspartate = N-carbamoyl-L-aspartate + phosphate + H(+)</text>
        <dbReference type="Rhea" id="RHEA:20013"/>
        <dbReference type="ChEBI" id="CHEBI:15378"/>
        <dbReference type="ChEBI" id="CHEBI:29991"/>
        <dbReference type="ChEBI" id="CHEBI:32814"/>
        <dbReference type="ChEBI" id="CHEBI:43474"/>
        <dbReference type="ChEBI" id="CHEBI:58228"/>
        <dbReference type="EC" id="2.1.3.2"/>
    </reaction>
</comment>
<comment type="pathway">
    <text evidence="1">Pyrimidine metabolism; UMP biosynthesis via de novo pathway; (S)-dihydroorotate from bicarbonate: step 2/3.</text>
</comment>
<comment type="subunit">
    <text evidence="1">Heterododecamer (2C3:3R2) of six catalytic PyrB chains organized as two trimers (C3), and six regulatory PyrI chains organized as three dimers (R2).</text>
</comment>
<comment type="similarity">
    <text evidence="1">Belongs to the aspartate/ornithine carbamoyltransferase superfamily. ATCase family.</text>
</comment>
<organism>
    <name type="scientific">Pelodictyon phaeoclathratiforme (strain DSM 5477 / BU-1)</name>
    <dbReference type="NCBI Taxonomy" id="324925"/>
    <lineage>
        <taxon>Bacteria</taxon>
        <taxon>Pseudomonadati</taxon>
        <taxon>Chlorobiota</taxon>
        <taxon>Chlorobiia</taxon>
        <taxon>Chlorobiales</taxon>
        <taxon>Chlorobiaceae</taxon>
        <taxon>Chlorobium/Pelodictyon group</taxon>
        <taxon>Pelodictyon</taxon>
    </lineage>
</organism>
<protein>
    <recommendedName>
        <fullName evidence="1">Aspartate carbamoyltransferase catalytic subunit</fullName>
        <ecNumber evidence="1">2.1.3.2</ecNumber>
    </recommendedName>
    <alternativeName>
        <fullName evidence="1">Aspartate transcarbamylase</fullName>
        <shortName evidence="1">ATCase</shortName>
    </alternativeName>
</protein>
<name>PYRB_PELPB</name>
<accession>B4SCQ7</accession>
<keyword id="KW-0665">Pyrimidine biosynthesis</keyword>
<keyword id="KW-1185">Reference proteome</keyword>
<keyword id="KW-0808">Transferase</keyword>
<gene>
    <name evidence="1" type="primary">pyrB</name>
    <name type="ordered locus">Ppha_2055</name>
</gene>
<evidence type="ECO:0000255" key="1">
    <source>
        <dbReference type="HAMAP-Rule" id="MF_00001"/>
    </source>
</evidence>
<reference key="1">
    <citation type="submission" date="2008-06" db="EMBL/GenBank/DDBJ databases">
        <title>Complete sequence of Pelodictyon phaeoclathratiforme BU-1.</title>
        <authorList>
            <consortium name="US DOE Joint Genome Institute"/>
            <person name="Lucas S."/>
            <person name="Copeland A."/>
            <person name="Lapidus A."/>
            <person name="Glavina del Rio T."/>
            <person name="Dalin E."/>
            <person name="Tice H."/>
            <person name="Bruce D."/>
            <person name="Goodwin L."/>
            <person name="Pitluck S."/>
            <person name="Schmutz J."/>
            <person name="Larimer F."/>
            <person name="Land M."/>
            <person name="Hauser L."/>
            <person name="Kyrpides N."/>
            <person name="Mikhailova N."/>
            <person name="Liu Z."/>
            <person name="Li T."/>
            <person name="Zhao F."/>
            <person name="Overmann J."/>
            <person name="Bryant D.A."/>
            <person name="Richardson P."/>
        </authorList>
    </citation>
    <scope>NUCLEOTIDE SEQUENCE [LARGE SCALE GENOMIC DNA]</scope>
    <source>
        <strain>DSM 5477 / BU-1</strain>
    </source>
</reference>
<proteinExistence type="inferred from homology"/>
<sequence>MSDLKHLTGLCNIPASNITSILDMAAGYKKKLITPCPSFEPSLQNKRIALVFFENSTRTRFSFEIAARHLGAGTLNFSASSSSVSKGESLSDTIKNLEAMQVDAFVLRHPSSGAADLITRITSKNVINAGDGSHEHPTQALLDMFTLREYFGTIDGLKVIIIGDVLHSRVARSNIYGLITAGAEVGICCPVTLMPPDADQLGITLFTDLDRAIAWADTAIVLRLQLERATGGYLPSLEEYSVHYGLTDERLERVQKHLLVLHPGPINREIEIANNVADRIQPPGYSKSMLLEQVTNGVAVRMAVLNTLLTL</sequence>
<feature type="chain" id="PRO_1000088784" description="Aspartate carbamoyltransferase catalytic subunit">
    <location>
        <begin position="1"/>
        <end position="311"/>
    </location>
</feature>
<feature type="binding site" evidence="1">
    <location>
        <position position="58"/>
    </location>
    <ligand>
        <name>carbamoyl phosphate</name>
        <dbReference type="ChEBI" id="CHEBI:58228"/>
    </ligand>
</feature>
<feature type="binding site" evidence="1">
    <location>
        <position position="59"/>
    </location>
    <ligand>
        <name>carbamoyl phosphate</name>
        <dbReference type="ChEBI" id="CHEBI:58228"/>
    </ligand>
</feature>
<feature type="binding site" evidence="1">
    <location>
        <position position="86"/>
    </location>
    <ligand>
        <name>L-aspartate</name>
        <dbReference type="ChEBI" id="CHEBI:29991"/>
    </ligand>
</feature>
<feature type="binding site" evidence="1">
    <location>
        <position position="108"/>
    </location>
    <ligand>
        <name>carbamoyl phosphate</name>
        <dbReference type="ChEBI" id="CHEBI:58228"/>
    </ligand>
</feature>
<feature type="binding site" evidence="1">
    <location>
        <position position="136"/>
    </location>
    <ligand>
        <name>carbamoyl phosphate</name>
        <dbReference type="ChEBI" id="CHEBI:58228"/>
    </ligand>
</feature>
<feature type="binding site" evidence="1">
    <location>
        <position position="139"/>
    </location>
    <ligand>
        <name>carbamoyl phosphate</name>
        <dbReference type="ChEBI" id="CHEBI:58228"/>
    </ligand>
</feature>
<feature type="binding site" evidence="1">
    <location>
        <position position="169"/>
    </location>
    <ligand>
        <name>L-aspartate</name>
        <dbReference type="ChEBI" id="CHEBI:29991"/>
    </ligand>
</feature>
<feature type="binding site" evidence="1">
    <location>
        <position position="223"/>
    </location>
    <ligand>
        <name>L-aspartate</name>
        <dbReference type="ChEBI" id="CHEBI:29991"/>
    </ligand>
</feature>
<feature type="binding site" evidence="1">
    <location>
        <position position="264"/>
    </location>
    <ligand>
        <name>carbamoyl phosphate</name>
        <dbReference type="ChEBI" id="CHEBI:58228"/>
    </ligand>
</feature>
<feature type="binding site" evidence="1">
    <location>
        <position position="265"/>
    </location>
    <ligand>
        <name>carbamoyl phosphate</name>
        <dbReference type="ChEBI" id="CHEBI:58228"/>
    </ligand>
</feature>